<dbReference type="EC" id="6.3.5.3" evidence="1"/>
<dbReference type="EMBL" id="AE014291">
    <property type="protein sequence ID" value="AAN29766.1"/>
    <property type="molecule type" value="Genomic_DNA"/>
</dbReference>
<dbReference type="EMBL" id="CP002997">
    <property type="protein sequence ID" value="AEM18183.1"/>
    <property type="molecule type" value="Genomic_DNA"/>
</dbReference>
<dbReference type="RefSeq" id="WP_004688249.1">
    <property type="nucleotide sequence ID" value="NZ_KN046804.1"/>
</dbReference>
<dbReference type="SMR" id="Q8G183"/>
<dbReference type="GeneID" id="97533862"/>
<dbReference type="KEGG" id="bms:BR0837"/>
<dbReference type="KEGG" id="bsi:BS1330_I0833"/>
<dbReference type="PATRIC" id="fig|204722.22.peg.1014"/>
<dbReference type="HOGENOM" id="CLU_003100_0_1_5"/>
<dbReference type="UniPathway" id="UPA00074">
    <property type="reaction ID" value="UER00128"/>
</dbReference>
<dbReference type="PRO" id="PR:Q8G183"/>
<dbReference type="Proteomes" id="UP000007104">
    <property type="component" value="Chromosome I"/>
</dbReference>
<dbReference type="GO" id="GO:0005737">
    <property type="term" value="C:cytoplasm"/>
    <property type="evidence" value="ECO:0007669"/>
    <property type="project" value="UniProtKB-SubCell"/>
</dbReference>
<dbReference type="GO" id="GO:0005524">
    <property type="term" value="F:ATP binding"/>
    <property type="evidence" value="ECO:0007669"/>
    <property type="project" value="UniProtKB-UniRule"/>
</dbReference>
<dbReference type="GO" id="GO:0000287">
    <property type="term" value="F:magnesium ion binding"/>
    <property type="evidence" value="ECO:0007669"/>
    <property type="project" value="UniProtKB-UniRule"/>
</dbReference>
<dbReference type="GO" id="GO:0004642">
    <property type="term" value="F:phosphoribosylformylglycinamidine synthase activity"/>
    <property type="evidence" value="ECO:0007669"/>
    <property type="project" value="UniProtKB-UniRule"/>
</dbReference>
<dbReference type="GO" id="GO:0006189">
    <property type="term" value="P:'de novo' IMP biosynthetic process"/>
    <property type="evidence" value="ECO:0007669"/>
    <property type="project" value="UniProtKB-UniRule"/>
</dbReference>
<dbReference type="CDD" id="cd02203">
    <property type="entry name" value="PurL_repeat1"/>
    <property type="match status" value="1"/>
</dbReference>
<dbReference type="CDD" id="cd02204">
    <property type="entry name" value="PurL_repeat2"/>
    <property type="match status" value="1"/>
</dbReference>
<dbReference type="FunFam" id="3.30.1330.10:FF:000004">
    <property type="entry name" value="Phosphoribosylformylglycinamidine synthase subunit PurL"/>
    <property type="match status" value="1"/>
</dbReference>
<dbReference type="Gene3D" id="3.90.650.10">
    <property type="entry name" value="PurM-like C-terminal domain"/>
    <property type="match status" value="2"/>
</dbReference>
<dbReference type="Gene3D" id="3.30.1330.10">
    <property type="entry name" value="PurM-like, N-terminal domain"/>
    <property type="match status" value="2"/>
</dbReference>
<dbReference type="HAMAP" id="MF_00420">
    <property type="entry name" value="PurL_2"/>
    <property type="match status" value="1"/>
</dbReference>
<dbReference type="InterPro" id="IPR010074">
    <property type="entry name" value="PRibForGlyAmidine_synth_PurL"/>
</dbReference>
<dbReference type="InterPro" id="IPR041609">
    <property type="entry name" value="PurL_linker"/>
</dbReference>
<dbReference type="InterPro" id="IPR010918">
    <property type="entry name" value="PurM-like_C_dom"/>
</dbReference>
<dbReference type="InterPro" id="IPR036676">
    <property type="entry name" value="PurM-like_C_sf"/>
</dbReference>
<dbReference type="InterPro" id="IPR016188">
    <property type="entry name" value="PurM-like_N"/>
</dbReference>
<dbReference type="InterPro" id="IPR036921">
    <property type="entry name" value="PurM-like_N_sf"/>
</dbReference>
<dbReference type="NCBIfam" id="TIGR01736">
    <property type="entry name" value="FGAM_synth_II"/>
    <property type="match status" value="1"/>
</dbReference>
<dbReference type="NCBIfam" id="NF002290">
    <property type="entry name" value="PRK01213.1"/>
    <property type="match status" value="1"/>
</dbReference>
<dbReference type="PANTHER" id="PTHR43555">
    <property type="entry name" value="PHOSPHORIBOSYLFORMYLGLYCINAMIDINE SYNTHASE SUBUNIT PURL"/>
    <property type="match status" value="1"/>
</dbReference>
<dbReference type="PANTHER" id="PTHR43555:SF1">
    <property type="entry name" value="PHOSPHORIBOSYLFORMYLGLYCINAMIDINE SYNTHASE SUBUNIT PURL"/>
    <property type="match status" value="1"/>
</dbReference>
<dbReference type="Pfam" id="PF00586">
    <property type="entry name" value="AIRS"/>
    <property type="match status" value="2"/>
</dbReference>
<dbReference type="Pfam" id="PF02769">
    <property type="entry name" value="AIRS_C"/>
    <property type="match status" value="2"/>
</dbReference>
<dbReference type="Pfam" id="PF18072">
    <property type="entry name" value="FGAR-AT_linker"/>
    <property type="match status" value="1"/>
</dbReference>
<dbReference type="PIRSF" id="PIRSF001587">
    <property type="entry name" value="FGAM_synthase_II"/>
    <property type="match status" value="1"/>
</dbReference>
<dbReference type="SUPFAM" id="SSF56042">
    <property type="entry name" value="PurM C-terminal domain-like"/>
    <property type="match status" value="2"/>
</dbReference>
<dbReference type="SUPFAM" id="SSF55326">
    <property type="entry name" value="PurM N-terminal domain-like"/>
    <property type="match status" value="2"/>
</dbReference>
<comment type="function">
    <text evidence="1">Part of the phosphoribosylformylglycinamidine synthase complex involved in the purines biosynthetic pathway. Catalyzes the ATP-dependent conversion of formylglycinamide ribonucleotide (FGAR) and glutamine to yield formylglycinamidine ribonucleotide (FGAM) and glutamate. The FGAM synthase complex is composed of three subunits. PurQ produces an ammonia molecule by converting glutamine to glutamate. PurL transfers the ammonia molecule to FGAR to form FGAM in an ATP-dependent manner. PurS interacts with PurQ and PurL and is thought to assist in the transfer of the ammonia molecule from PurQ to PurL.</text>
</comment>
<comment type="catalytic activity">
    <reaction evidence="1">
        <text>N(2)-formyl-N(1)-(5-phospho-beta-D-ribosyl)glycinamide + L-glutamine + ATP + H2O = 2-formamido-N(1)-(5-O-phospho-beta-D-ribosyl)acetamidine + L-glutamate + ADP + phosphate + H(+)</text>
        <dbReference type="Rhea" id="RHEA:17129"/>
        <dbReference type="ChEBI" id="CHEBI:15377"/>
        <dbReference type="ChEBI" id="CHEBI:15378"/>
        <dbReference type="ChEBI" id="CHEBI:29985"/>
        <dbReference type="ChEBI" id="CHEBI:30616"/>
        <dbReference type="ChEBI" id="CHEBI:43474"/>
        <dbReference type="ChEBI" id="CHEBI:58359"/>
        <dbReference type="ChEBI" id="CHEBI:147286"/>
        <dbReference type="ChEBI" id="CHEBI:147287"/>
        <dbReference type="ChEBI" id="CHEBI:456216"/>
        <dbReference type="EC" id="6.3.5.3"/>
    </reaction>
</comment>
<comment type="pathway">
    <text evidence="1">Purine metabolism; IMP biosynthesis via de novo pathway; 5-amino-1-(5-phospho-D-ribosyl)imidazole from N(2)-formyl-N(1)-(5-phospho-D-ribosyl)glycinamide: step 1/2.</text>
</comment>
<comment type="subunit">
    <text evidence="1">Monomer. Part of the FGAM synthase complex composed of 1 PurL, 1 PurQ and 2 PurS subunits.</text>
</comment>
<comment type="subcellular location">
    <subcellularLocation>
        <location evidence="1">Cytoplasm</location>
    </subcellularLocation>
</comment>
<comment type="similarity">
    <text evidence="1">Belongs to the FGAMS family.</text>
</comment>
<gene>
    <name evidence="1" type="primary">purL</name>
    <name type="ordered locus">BR0837</name>
    <name type="ordered locus">BS1330_I0833</name>
</gene>
<keyword id="KW-0067">ATP-binding</keyword>
<keyword id="KW-0963">Cytoplasm</keyword>
<keyword id="KW-0436">Ligase</keyword>
<keyword id="KW-0460">Magnesium</keyword>
<keyword id="KW-0479">Metal-binding</keyword>
<keyword id="KW-0547">Nucleotide-binding</keyword>
<keyword id="KW-0658">Purine biosynthesis</keyword>
<proteinExistence type="inferred from homology"/>
<feature type="chain" id="PRO_0000100445" description="Phosphoribosylformylglycinamidine synthase subunit PurL">
    <location>
        <begin position="1"/>
        <end position="740"/>
    </location>
</feature>
<feature type="active site" evidence="1">
    <location>
        <position position="50"/>
    </location>
</feature>
<feature type="active site" description="Proton acceptor" evidence="1">
    <location>
        <position position="96"/>
    </location>
</feature>
<feature type="binding site" evidence="1">
    <location>
        <position position="53"/>
    </location>
    <ligand>
        <name>ATP</name>
        <dbReference type="ChEBI" id="CHEBI:30616"/>
    </ligand>
</feature>
<feature type="binding site" evidence="1">
    <location>
        <position position="92"/>
    </location>
    <ligand>
        <name>ATP</name>
        <dbReference type="ChEBI" id="CHEBI:30616"/>
    </ligand>
</feature>
<feature type="binding site" evidence="1">
    <location>
        <position position="94"/>
    </location>
    <ligand>
        <name>Mg(2+)</name>
        <dbReference type="ChEBI" id="CHEBI:18420"/>
        <label>1</label>
    </ligand>
</feature>
<feature type="binding site" evidence="1">
    <location>
        <begin position="95"/>
        <end position="98"/>
    </location>
    <ligand>
        <name>substrate</name>
    </ligand>
</feature>
<feature type="binding site" evidence="1">
    <location>
        <position position="117"/>
    </location>
    <ligand>
        <name>substrate</name>
    </ligand>
</feature>
<feature type="binding site" evidence="1">
    <location>
        <position position="118"/>
    </location>
    <ligand>
        <name>Mg(2+)</name>
        <dbReference type="ChEBI" id="CHEBI:18420"/>
        <label>2</label>
    </ligand>
</feature>
<feature type="binding site" evidence="1">
    <location>
        <position position="241"/>
    </location>
    <ligand>
        <name>substrate</name>
    </ligand>
</feature>
<feature type="binding site" evidence="1">
    <location>
        <position position="269"/>
    </location>
    <ligand>
        <name>Mg(2+)</name>
        <dbReference type="ChEBI" id="CHEBI:18420"/>
        <label>2</label>
    </ligand>
</feature>
<feature type="binding site" evidence="1">
    <location>
        <begin position="313"/>
        <end position="315"/>
    </location>
    <ligand>
        <name>substrate</name>
    </ligand>
</feature>
<feature type="binding site" evidence="1">
    <location>
        <position position="495"/>
    </location>
    <ligand>
        <name>ATP</name>
        <dbReference type="ChEBI" id="CHEBI:30616"/>
    </ligand>
</feature>
<feature type="binding site" evidence="1">
    <location>
        <position position="532"/>
    </location>
    <ligand>
        <name>ATP</name>
        <dbReference type="ChEBI" id="CHEBI:30616"/>
    </ligand>
</feature>
<feature type="binding site" evidence="1">
    <location>
        <position position="533"/>
    </location>
    <ligand>
        <name>Mg(2+)</name>
        <dbReference type="ChEBI" id="CHEBI:18420"/>
        <label>1</label>
    </ligand>
</feature>
<feature type="binding site" evidence="1">
    <location>
        <position position="535"/>
    </location>
    <ligand>
        <name>substrate</name>
    </ligand>
</feature>
<accession>Q8G183</accession>
<accession>G0K8Y5</accession>
<sequence length="740" mass="79117">MTISNTRDITPELIEAHGLKPDEYQRILELIGREPTFTELGIFSAMWNEHCSYKSSKKWLRTLPTSGPRVIQGPGENAGVVDIGDGDCVVFKMESHNHPSYIEPYQGAATGVGGILRDVFTMGARPVAAMNALRFGEPDHPKTRHLVSGVVSGVGGYGNAFGVPTVGGEVNFDKRYNGNILVNAFAAGLARHDGIFLSEAKGVGLPVVYLGAKTGRDGVGGATMASAEFDESIEEKRPTVQVGDPFTEKCLLEACLELMASGAVIAIQDMGAAGLTCSAVEMGAKGDLGIELILDHVPVREENMTAYEMMLSESQERMLMVLKPEKEAEAQAIFRKWGLDFAIVGKTTDDLRFRVIHQGEEVANLPIKDLGDEAPEYDRPWMEPGKHAPLPASNVPQVEDYSAALLKLIGSPDLSSRRWVYEQYDTLIQGNSLQVPGGDAGVIRVEGHETKALAFSSDVTPRYCEADPFEGGKQAVAECWRNITATGAEPLASTDNLNFGNPEKPEIMGQLVKAIEGIGEACRALDFPIVSGNVSLYNETNGQAILPTPTIAGVGLLPDWSQMAKIGGMQDGDTLVLLGGDGTHLGQSVYLRDLFDRADGPAPFVDLALEKRNGEFVRSAIRNGQVTACHDLSDGGLAIAVAEMAIKSGKGATLDAGDGLPHALLFGEDQARYVISATPEMAKLIALNAEGAGVPFRILGTVGGDRLKISKNVDVSVADLTQAYEGWFPNFMNGELTGNN</sequence>
<protein>
    <recommendedName>
        <fullName evidence="1">Phosphoribosylformylglycinamidine synthase subunit PurL</fullName>
        <shortName evidence="1">FGAM synthase</shortName>
        <ecNumber evidence="1">6.3.5.3</ecNumber>
    </recommendedName>
    <alternativeName>
        <fullName evidence="1">Formylglycinamide ribonucleotide amidotransferase subunit II</fullName>
        <shortName evidence="1">FGAR amidotransferase II</shortName>
        <shortName evidence="1">FGAR-AT II</shortName>
    </alternativeName>
    <alternativeName>
        <fullName evidence="1">Glutamine amidotransferase PurL</fullName>
    </alternativeName>
    <alternativeName>
        <fullName evidence="1">Phosphoribosylformylglycinamidine synthase subunit II</fullName>
    </alternativeName>
</protein>
<name>PURL_BRUSU</name>
<organism>
    <name type="scientific">Brucella suis biovar 1 (strain 1330)</name>
    <dbReference type="NCBI Taxonomy" id="204722"/>
    <lineage>
        <taxon>Bacteria</taxon>
        <taxon>Pseudomonadati</taxon>
        <taxon>Pseudomonadota</taxon>
        <taxon>Alphaproteobacteria</taxon>
        <taxon>Hyphomicrobiales</taxon>
        <taxon>Brucellaceae</taxon>
        <taxon>Brucella/Ochrobactrum group</taxon>
        <taxon>Brucella</taxon>
    </lineage>
</organism>
<reference key="1">
    <citation type="journal article" date="2002" name="Proc. Natl. Acad. Sci. U.S.A.">
        <title>The Brucella suis genome reveals fundamental similarities between animal and plant pathogens and symbionts.</title>
        <authorList>
            <person name="Paulsen I.T."/>
            <person name="Seshadri R."/>
            <person name="Nelson K.E."/>
            <person name="Eisen J.A."/>
            <person name="Heidelberg J.F."/>
            <person name="Read T.D."/>
            <person name="Dodson R.J."/>
            <person name="Umayam L.A."/>
            <person name="Brinkac L.M."/>
            <person name="Beanan M.J."/>
            <person name="Daugherty S.C."/>
            <person name="DeBoy R.T."/>
            <person name="Durkin A.S."/>
            <person name="Kolonay J.F."/>
            <person name="Madupu R."/>
            <person name="Nelson W.C."/>
            <person name="Ayodeji B."/>
            <person name="Kraul M."/>
            <person name="Shetty J."/>
            <person name="Malek J.A."/>
            <person name="Van Aken S.E."/>
            <person name="Riedmuller S."/>
            <person name="Tettelin H."/>
            <person name="Gill S.R."/>
            <person name="White O."/>
            <person name="Salzberg S.L."/>
            <person name="Hoover D.L."/>
            <person name="Lindler L.E."/>
            <person name="Halling S.M."/>
            <person name="Boyle S.M."/>
            <person name="Fraser C.M."/>
        </authorList>
    </citation>
    <scope>NUCLEOTIDE SEQUENCE [LARGE SCALE GENOMIC DNA]</scope>
    <source>
        <strain>1330</strain>
    </source>
</reference>
<reference key="2">
    <citation type="journal article" date="2011" name="J. Bacteriol.">
        <title>Revised genome sequence of Brucella suis 1330.</title>
        <authorList>
            <person name="Tae H."/>
            <person name="Shallom S."/>
            <person name="Settlage R."/>
            <person name="Preston D."/>
            <person name="Adams L.G."/>
            <person name="Garner H.R."/>
        </authorList>
    </citation>
    <scope>NUCLEOTIDE SEQUENCE [LARGE SCALE GENOMIC DNA]</scope>
    <source>
        <strain>1330</strain>
    </source>
</reference>
<evidence type="ECO:0000255" key="1">
    <source>
        <dbReference type="HAMAP-Rule" id="MF_00420"/>
    </source>
</evidence>